<comment type="function">
    <text evidence="1">Catalyzes the NADPH-dependent reduction of glyoxylate and hydroxypyruvate into glycolate and glycerate, respectively.</text>
</comment>
<comment type="catalytic activity">
    <reaction evidence="1">
        <text>glycolate + NADP(+) = glyoxylate + NADPH + H(+)</text>
        <dbReference type="Rhea" id="RHEA:10992"/>
        <dbReference type="ChEBI" id="CHEBI:15378"/>
        <dbReference type="ChEBI" id="CHEBI:29805"/>
        <dbReference type="ChEBI" id="CHEBI:36655"/>
        <dbReference type="ChEBI" id="CHEBI:57783"/>
        <dbReference type="ChEBI" id="CHEBI:58349"/>
        <dbReference type="EC" id="1.1.1.79"/>
    </reaction>
</comment>
<comment type="catalytic activity">
    <reaction evidence="1">
        <text>(R)-glycerate + NAD(+) = 3-hydroxypyruvate + NADH + H(+)</text>
        <dbReference type="Rhea" id="RHEA:17905"/>
        <dbReference type="ChEBI" id="CHEBI:15378"/>
        <dbReference type="ChEBI" id="CHEBI:16659"/>
        <dbReference type="ChEBI" id="CHEBI:17180"/>
        <dbReference type="ChEBI" id="CHEBI:57540"/>
        <dbReference type="ChEBI" id="CHEBI:57945"/>
        <dbReference type="EC" id="1.1.1.81"/>
    </reaction>
</comment>
<comment type="catalytic activity">
    <reaction evidence="1">
        <text>(R)-glycerate + NADP(+) = 3-hydroxypyruvate + NADPH + H(+)</text>
        <dbReference type="Rhea" id="RHEA:18657"/>
        <dbReference type="ChEBI" id="CHEBI:15378"/>
        <dbReference type="ChEBI" id="CHEBI:16659"/>
        <dbReference type="ChEBI" id="CHEBI:17180"/>
        <dbReference type="ChEBI" id="CHEBI:57783"/>
        <dbReference type="ChEBI" id="CHEBI:58349"/>
        <dbReference type="EC" id="1.1.1.81"/>
    </reaction>
</comment>
<comment type="subcellular location">
    <subcellularLocation>
        <location evidence="1">Cytoplasm</location>
    </subcellularLocation>
</comment>
<comment type="similarity">
    <text evidence="1">Belongs to the D-isomer specific 2-hydroxyacid dehydrogenase family. GhrA subfamily.</text>
</comment>
<comment type="sequence caution" evidence="2">
    <conflict type="erroneous initiation">
        <sequence resource="EMBL-CDS" id="ABE06636"/>
    </conflict>
</comment>
<sequence length="312" mass="35372">MDIIFYHPTFDTQWWIEALRKAIPQARVRAWKSGDNDSADYALVWHPPVEMLAGRDLKAVFALGAGVDSILSKLQAHPEMLKPSVPLFRLEDTGMGEQMQEYAVSQVLHWFRRFDDYRIQQNSSHWQPLPEYHREDFTIGILGAGVLGSKVAQSLQTWRFPLRCWSRTRKSWPGVQSFAGREELSAFLSQCRVLINLLPNTPETVGIINQQLLEKLPDGAYLLNLARGVHVVEDDLLAALDSGKVKGAMLDVFNREPLPPESPLWQHPRVTITPHVAAITRPAEAVEYISRTIAQLEKGERLCGQVDRARGY</sequence>
<protein>
    <recommendedName>
        <fullName evidence="1">Glyoxylate/hydroxypyruvate reductase A</fullName>
        <ecNumber evidence="1">1.1.1.79</ecNumber>
        <ecNumber evidence="1">1.1.1.81</ecNumber>
    </recommendedName>
    <alternativeName>
        <fullName evidence="1">2-ketoacid reductase</fullName>
    </alternativeName>
</protein>
<name>GHRA_ECOUT</name>
<gene>
    <name evidence="1" type="primary">ghrA</name>
    <name type="ordered locus">UTI89_C1154</name>
</gene>
<proteinExistence type="inferred from homology"/>
<reference key="1">
    <citation type="journal article" date="2006" name="Proc. Natl. Acad. Sci. U.S.A.">
        <title>Identification of genes subject to positive selection in uropathogenic strains of Escherichia coli: a comparative genomics approach.</title>
        <authorList>
            <person name="Chen S.L."/>
            <person name="Hung C.-S."/>
            <person name="Xu J."/>
            <person name="Reigstad C.S."/>
            <person name="Magrini V."/>
            <person name="Sabo A."/>
            <person name="Blasiar D."/>
            <person name="Bieri T."/>
            <person name="Meyer R.R."/>
            <person name="Ozersky P."/>
            <person name="Armstrong J.R."/>
            <person name="Fulton R.S."/>
            <person name="Latreille J.P."/>
            <person name="Spieth J."/>
            <person name="Hooton T.M."/>
            <person name="Mardis E.R."/>
            <person name="Hultgren S.J."/>
            <person name="Gordon J.I."/>
        </authorList>
    </citation>
    <scope>NUCLEOTIDE SEQUENCE [LARGE SCALE GENOMIC DNA]</scope>
    <source>
        <strain>UTI89 / UPEC</strain>
    </source>
</reference>
<evidence type="ECO:0000255" key="1">
    <source>
        <dbReference type="HAMAP-Rule" id="MF_01666"/>
    </source>
</evidence>
<evidence type="ECO:0000305" key="2"/>
<organism>
    <name type="scientific">Escherichia coli (strain UTI89 / UPEC)</name>
    <dbReference type="NCBI Taxonomy" id="364106"/>
    <lineage>
        <taxon>Bacteria</taxon>
        <taxon>Pseudomonadati</taxon>
        <taxon>Pseudomonadota</taxon>
        <taxon>Gammaproteobacteria</taxon>
        <taxon>Enterobacterales</taxon>
        <taxon>Enterobacteriaceae</taxon>
        <taxon>Escherichia</taxon>
    </lineage>
</organism>
<dbReference type="EC" id="1.1.1.79" evidence="1"/>
<dbReference type="EC" id="1.1.1.81" evidence="1"/>
<dbReference type="EMBL" id="CP000243">
    <property type="protein sequence ID" value="ABE06636.1"/>
    <property type="status" value="ALT_INIT"/>
    <property type="molecule type" value="Genomic_DNA"/>
</dbReference>
<dbReference type="RefSeq" id="WP_000351298.1">
    <property type="nucleotide sequence ID" value="NZ_CP064825.1"/>
</dbReference>
<dbReference type="SMR" id="Q1RDC8"/>
<dbReference type="KEGG" id="eci:UTI89_C1154"/>
<dbReference type="HOGENOM" id="CLU_019796_1_0_6"/>
<dbReference type="Proteomes" id="UP000001952">
    <property type="component" value="Chromosome"/>
</dbReference>
<dbReference type="GO" id="GO:0005829">
    <property type="term" value="C:cytosol"/>
    <property type="evidence" value="ECO:0007669"/>
    <property type="project" value="UniProtKB-ARBA"/>
</dbReference>
<dbReference type="GO" id="GO:0030267">
    <property type="term" value="F:glyoxylate reductase (NADPH) activity"/>
    <property type="evidence" value="ECO:0007669"/>
    <property type="project" value="UniProtKB-UniRule"/>
</dbReference>
<dbReference type="GO" id="GO:0008465">
    <property type="term" value="F:hydroxypyruvate reductase (NADH) activity"/>
    <property type="evidence" value="ECO:0007669"/>
    <property type="project" value="RHEA"/>
</dbReference>
<dbReference type="GO" id="GO:0120509">
    <property type="term" value="F:hydroxypyruvate reductase (NADPH) activity"/>
    <property type="evidence" value="ECO:0007669"/>
    <property type="project" value="RHEA"/>
</dbReference>
<dbReference type="GO" id="GO:0051287">
    <property type="term" value="F:NAD binding"/>
    <property type="evidence" value="ECO:0007669"/>
    <property type="project" value="InterPro"/>
</dbReference>
<dbReference type="CDD" id="cd12164">
    <property type="entry name" value="GDH_like_2"/>
    <property type="match status" value="1"/>
</dbReference>
<dbReference type="FunFam" id="3.40.50.720:FF:000110">
    <property type="entry name" value="Glyoxylate/hydroxypyruvate reductase A"/>
    <property type="match status" value="1"/>
</dbReference>
<dbReference type="Gene3D" id="3.40.50.720">
    <property type="entry name" value="NAD(P)-binding Rossmann-like Domain"/>
    <property type="match status" value="2"/>
</dbReference>
<dbReference type="HAMAP" id="MF_01666">
    <property type="entry name" value="2_Hacid_dh_C_GhrA"/>
    <property type="match status" value="1"/>
</dbReference>
<dbReference type="InterPro" id="IPR029753">
    <property type="entry name" value="D-isomer_DH_CS"/>
</dbReference>
<dbReference type="InterPro" id="IPR006140">
    <property type="entry name" value="D-isomer_DH_NAD-bd"/>
</dbReference>
<dbReference type="InterPro" id="IPR023514">
    <property type="entry name" value="GhrA_Enterobacterales"/>
</dbReference>
<dbReference type="InterPro" id="IPR036291">
    <property type="entry name" value="NAD(P)-bd_dom_sf"/>
</dbReference>
<dbReference type="NCBIfam" id="NF012013">
    <property type="entry name" value="PRK15469.1"/>
    <property type="match status" value="1"/>
</dbReference>
<dbReference type="PANTHER" id="PTHR43333">
    <property type="entry name" value="2-HACID_DH_C DOMAIN-CONTAINING PROTEIN"/>
    <property type="match status" value="1"/>
</dbReference>
<dbReference type="PANTHER" id="PTHR43333:SF1">
    <property type="entry name" value="D-ISOMER SPECIFIC 2-HYDROXYACID DEHYDROGENASE NAD-BINDING DOMAIN-CONTAINING PROTEIN"/>
    <property type="match status" value="1"/>
</dbReference>
<dbReference type="Pfam" id="PF02826">
    <property type="entry name" value="2-Hacid_dh_C"/>
    <property type="match status" value="1"/>
</dbReference>
<dbReference type="SUPFAM" id="SSF51735">
    <property type="entry name" value="NAD(P)-binding Rossmann-fold domains"/>
    <property type="match status" value="1"/>
</dbReference>
<dbReference type="PROSITE" id="PS00671">
    <property type="entry name" value="D_2_HYDROXYACID_DH_3"/>
    <property type="match status" value="1"/>
</dbReference>
<keyword id="KW-0963">Cytoplasm</keyword>
<keyword id="KW-0520">NAD</keyword>
<keyword id="KW-0521">NADP</keyword>
<keyword id="KW-0560">Oxidoreductase</keyword>
<accession>Q1RDC8</accession>
<feature type="chain" id="PRO_0000348362" description="Glyoxylate/hydroxypyruvate reductase A">
    <location>
        <begin position="1"/>
        <end position="312"/>
    </location>
</feature>
<feature type="active site" evidence="1">
    <location>
        <position position="227"/>
    </location>
</feature>
<feature type="active site" description="Proton donor" evidence="1">
    <location>
        <position position="275"/>
    </location>
</feature>